<keyword id="KW-0029">Amino-acid transport</keyword>
<keyword id="KW-1003">Cell membrane</keyword>
<keyword id="KW-1015">Disulfide bond</keyword>
<keyword id="KW-0325">Glycoprotein</keyword>
<keyword id="KW-0406">Ion transport</keyword>
<keyword id="KW-0472">Membrane</keyword>
<keyword id="KW-0597">Phosphoprotein</keyword>
<keyword id="KW-1185">Reference proteome</keyword>
<keyword id="KW-0915">Sodium</keyword>
<keyword id="KW-0739">Sodium transport</keyword>
<keyword id="KW-0769">Symport</keyword>
<keyword id="KW-0812">Transmembrane</keyword>
<keyword id="KW-1133">Transmembrane helix</keyword>
<keyword id="KW-0813">Transport</keyword>
<keyword id="KW-0832">Ubl conjugation</keyword>
<reference key="1">
    <citation type="journal article" date="2000" name="J. Biol. Chem.">
        <title>Cloning of an amino acid transporter with functional characteristics and tissue expression pattern identical to that of system A.</title>
        <authorList>
            <person name="Sugawara M."/>
            <person name="Nakanishi T."/>
            <person name="Fei Y.-J."/>
            <person name="Huang W."/>
            <person name="Ganapathy M.E."/>
            <person name="Leibach F.H."/>
            <person name="Ganapathy V."/>
        </authorList>
    </citation>
    <scope>NUCLEOTIDE SEQUENCE [MRNA]</scope>
    <scope>FUNCTION</scope>
    <scope>TRANSPORTER ACTIVITY</scope>
    <scope>ACTIVITY REGULATION</scope>
    <scope>BIOPHYSICOCHEMICAL PROPERTIES</scope>
    <scope>TISSUE SPECIFICITY</scope>
    <source>
        <strain>Sprague-Dawley</strain>
        <tissue>Skeletal muscle</tissue>
    </source>
</reference>
<reference key="2">
    <citation type="journal article" date="2000" name="J. Biol. Chem.">
        <title>A novel system A isoform mediating Na+/neutral amino acid cotransport.</title>
        <authorList>
            <person name="Yao D."/>
            <person name="Mackenzie B."/>
            <person name="Ming H."/>
            <person name="Varoqui H."/>
            <person name="Zhu H."/>
            <person name="Hediger M.A."/>
            <person name="Erickson J.D."/>
        </authorList>
    </citation>
    <scope>NUCLEOTIDE SEQUENCE [MRNA]</scope>
    <scope>FUNCTION</scope>
    <scope>TRANSPORTER ACTIVITY</scope>
    <scope>ACTIVITY REGULATION</scope>
    <scope>BIOPHYSICOCHEMICAL PROPERTIES</scope>
    <scope>TISSUE SPECIFICITY</scope>
    <source>
        <strain>Sprague-Dawley</strain>
        <tissue>Cerebellum</tissue>
    </source>
</reference>
<reference key="3">
    <citation type="journal article" date="2000" name="Proc. Natl. Acad. Sci. U.S.A.">
        <title>Amino acid transport system A resembles system N in sequence but differs in mechanism.</title>
        <authorList>
            <person name="Reimer R.J."/>
            <person name="Chaudhry F.A."/>
            <person name="Gray A.T."/>
            <person name="Edwards R.H."/>
        </authorList>
    </citation>
    <scope>NUCLEOTIDE SEQUENCE [MRNA]</scope>
    <scope>FUNCTION</scope>
    <scope>TRANSPORTER ACTIVITY</scope>
    <scope>ACTIVITY REGULATION</scope>
    <scope>BIOPHYSICOCHEMICAL PROPERTIES</scope>
    <scope>SUBCELLULAR LOCATION</scope>
    <scope>TISSUE SPECIFICITY</scope>
    <source>
        <tissue>Brain</tissue>
    </source>
</reference>
<reference key="4">
    <citation type="journal article" date="2001" name="Biochem. J.">
        <title>Subcellular localization and adaptive up-regulation of the system A (SAT2) amino acid transporter in skeletal-muscle cells and adipocytes.</title>
        <authorList>
            <person name="Hyde R."/>
            <person name="Christie G.R."/>
            <person name="Litherland G.J."/>
            <person name="Hajduch E."/>
            <person name="Taylor P.M."/>
            <person name="Hundal H.S."/>
        </authorList>
    </citation>
    <scope>SUBCELLULAR LOCATION</scope>
    <scope>TISSUE SPECIFICITY</scope>
    <scope>INDUCTION</scope>
</reference>
<reference key="5">
    <citation type="journal article" date="2001" name="Biochem. J.">
        <title>Transforming growth factor-beta 1 stimulates vascular smooth muscle cell L-proline transport by inducing system A amino acid transporter 2 (SAT2) gene expression.</title>
        <authorList>
            <person name="Ensenat D."/>
            <person name="Hassan S."/>
            <person name="Reyna S.V."/>
            <person name="Schafer A.I."/>
            <person name="Durante W."/>
        </authorList>
    </citation>
    <scope>FUNCTION</scope>
    <scope>TRANSPORTER ACTIVITY</scope>
    <scope>ACTIVITY REGULATION</scope>
    <scope>BIOPHYSICOCHEMICAL PROPERTIES</scope>
    <scope>INDUCTION BY TGFB1</scope>
</reference>
<reference key="6">
    <citation type="journal article" date="2002" name="Arch. Biochem. Biophys.">
        <title>ATA2-mediated amino acid uptake following partial hepatectomy is regulated by redistribution to the plasma membrane.</title>
        <authorList>
            <person name="Freeman T.L."/>
            <person name="Thiele G.M."/>
            <person name="Tuma D.J."/>
            <person name="Machu T.K."/>
            <person name="Mailliard M.E."/>
        </authorList>
    </citation>
    <scope>FUNCTION</scope>
    <scope>BIOPHYSICOCHEMICAL PROPERTIES</scope>
    <scope>SUBCELLULAR LOCATION</scope>
</reference>
<reference key="7">
    <citation type="journal article" date="2002" name="J. Biol. Chem.">
        <title>Insulin promotes the cell surface recruitment of the SAT2/ATA2 system A amino acid transporter from an endosomal compartment in skeletal muscle cells.</title>
        <authorList>
            <person name="Hyde R."/>
            <person name="Peyrollier K."/>
            <person name="Hundal H.S."/>
        </authorList>
    </citation>
    <scope>SUBCELLULAR LOCATION</scope>
</reference>
<reference key="8">
    <citation type="journal article" date="2002" name="J. Neurosci.">
        <title>Glutamine uptake by neurons: interaction of protons with system a transporters.</title>
        <authorList>
            <person name="Chaudhry F.A."/>
            <person name="Schmitz D."/>
            <person name="Reimer R.J."/>
            <person name="Larsson P."/>
            <person name="Gray A.T."/>
            <person name="Nicoll R."/>
            <person name="Kavanaugh M."/>
            <person name="Edwards R.H."/>
        </authorList>
    </citation>
    <scope>FUNCTION</scope>
    <scope>TRANSPORTER ACTIVITY</scope>
    <scope>ACTIVITY REGULATION</scope>
    <scope>BIOPHYSICOCHEMICAL PROPERTIES</scope>
</reference>
<reference key="9">
    <citation type="journal article" date="2002" name="Mol. Pharmacol.">
        <title>ATA2 is predominantly expressed as system A at the blood-brain barrier and acts as brain-to-blood efflux transport for L-proline.</title>
        <authorList>
            <person name="Takanaga H."/>
            <person name="Tokuda N."/>
            <person name="Ohtsuki S."/>
            <person name="Hosoya K."/>
            <person name="Terasaki T."/>
        </authorList>
    </citation>
    <scope>FUNCTION</scope>
</reference>
<reference key="10">
    <citation type="journal article" date="2005" name="Neuroscience">
        <title>Immunohistochemical localization of the amino acid transporter SNAT2 in the rat brain.</title>
        <authorList>
            <person name="Gonzalez-Gonzalez I.M."/>
            <person name="Cubelos B."/>
            <person name="Gimenez C."/>
            <person name="Zafra F."/>
        </authorList>
    </citation>
    <scope>SUBCELLULAR LOCATION</scope>
    <scope>TISSUE SPECIFICITY</scope>
</reference>
<reference key="11">
    <citation type="journal article" date="2006" name="Biochem. J.">
        <title>Evidence for allosteric regulation of pH-sensitive System A (SNAT2) and System N (SNAT5) amino acid transporter activity involving a conserved histidine residue.</title>
        <authorList>
            <person name="Baird F.E."/>
            <person name="Pinilla-Tenas J.J."/>
            <person name="Ogilvie W.L.J."/>
            <person name="Ganapathy V."/>
            <person name="Hundal H.S."/>
            <person name="Taylor P.M."/>
        </authorList>
    </citation>
    <scope>FUNCTION</scope>
    <scope>TRANSPORTER ACTIVITY</scope>
    <scope>ACTIVITY REGULATION</scope>
    <scope>BIOPHYSICOCHEMICAL PROPERTIES</scope>
    <scope>MUTAGENESIS OF HIS-504</scope>
</reference>
<reference key="12">
    <citation type="journal article" date="2006" name="Neuroscience">
        <title>Localization of the Na(+)-coupled neutral amino acid transporter 2 in the cerebral cortex.</title>
        <authorList>
            <person name="Melone M."/>
            <person name="Varoqui H."/>
            <person name="Erickson J.D."/>
            <person name="Conti F."/>
        </authorList>
    </citation>
    <scope>SUBCELLULAR LOCATION</scope>
    <scope>TISSUE SPECIFICITY</scope>
</reference>
<reference key="13">
    <citation type="journal article" date="2007" name="J. Biol. Chem.">
        <title>Distinct sensor pathways in the hierarchical control of SNAT2, a putative amino acid transceptor, by amino acid availability.</title>
        <authorList>
            <person name="Hyde R."/>
            <person name="Cwiklinski E.L."/>
            <person name="MacAulay K."/>
            <person name="Taylor P.M."/>
            <person name="Hundal H.S."/>
        </authorList>
    </citation>
    <scope>TOPOLOGY</scope>
    <scope>INDUCTION</scope>
</reference>
<reference key="14">
    <citation type="journal article" date="2008" name="J. Biol. Chem.">
        <title>Highly conserved asparagine 82 controls the interaction of Na+ with the sodium-coupled neutral amino acid transporter SNAT2.</title>
        <authorList>
            <person name="Zhang Z."/>
            <person name="Gameiro A."/>
            <person name="Grewer C."/>
        </authorList>
    </citation>
    <scope>FUNCTION</scope>
    <scope>TRANSPORTER ACTIVITY</scope>
    <scope>BIOPHYSICOCHEMICAL PROPERTIES</scope>
    <scope>SODIUM BINDING</scope>
    <scope>MUTAGENESIS OF ASN-82; TYR-337 AND ARG-374</scope>
</reference>
<reference key="15">
    <citation type="journal article" date="2009" name="Amino Acids">
        <title>Regulatory mechanisms of SNAT2, an amino acid transporter, in L6 rat skeletal muscle cells by insulin, osmotic shock and amino acid deprivation.</title>
        <authorList>
            <person name="Kashiwagi H."/>
            <person name="Yamazaki K."/>
            <person name="Takekuma Y."/>
            <person name="Ganapathy V."/>
            <person name="Sugawara M."/>
        </authorList>
    </citation>
    <scope>FUNCTION</scope>
    <scope>BIOPHYSICOCHEMICAL PROPERTIES</scope>
    <scope>INDUCTION</scope>
</reference>
<reference key="16">
    <citation type="journal article" date="2009" name="J. Biol. Chem.">
        <title>A conserved Na(+) binding site of the sodium-coupled neutral amino acid transporter 2 (SNAT2).</title>
        <authorList>
            <person name="Zhang Z."/>
            <person name="Albers T."/>
            <person name="Fiumera H.L."/>
            <person name="Gameiro A."/>
            <person name="Grewer C."/>
        </authorList>
    </citation>
    <scope>FUNCTION</scope>
    <scope>TRANSPORTER ACTIVITY</scope>
    <scope>BIOPHYSICOCHEMICAL PROPERTIES</scope>
    <scope>SODIUM BINDING</scope>
    <scope>MUTAGENESIS OF THR-384</scope>
</reference>
<reference key="17">
    <citation type="journal article" date="2009" name="Cereb. Cortex">
        <title>System A transporter SAT2 mediates replenishment of dendritic glutamate pools controlling retrograde signaling by glutamate.</title>
        <authorList>
            <person name="Jenstad M."/>
            <person name="Quazi A.Z."/>
            <person name="Zilberter M."/>
            <person name="Hagleroed C."/>
            <person name="Berghuis P."/>
            <person name="Saddique N."/>
            <person name="Goiny M."/>
            <person name="Buntup D."/>
            <person name="Davanger S."/>
            <person name="S Haug F.M."/>
            <person name="Barnes C.A."/>
            <person name="McNaughton B.L."/>
            <person name="Ottersen O.P."/>
            <person name="Storm-Mathisen J."/>
            <person name="Harkany T."/>
            <person name="Chaudhry F.A."/>
        </authorList>
    </citation>
    <scope>FUNCTION</scope>
    <scope>TISSUE SPECIFICITY</scope>
    <scope>SUBCELLULAR LOCATION</scope>
</reference>
<reference key="18">
    <citation type="journal article" date="2011" name="Biochem. J.">
        <title>The C-terminal domain of the neutral amino acid transporter SNAT2 regulates transport activity through voltage-dependent processes.</title>
        <authorList>
            <person name="Zhang Z."/>
            <person name="Zander C.B."/>
            <person name="Grewer C."/>
        </authorList>
    </citation>
    <scope>FUNCTION</scope>
    <scope>TRANSPORTER ACTIVITY</scope>
    <scope>BIOPHYSICOCHEMICAL PROPERTIES</scope>
    <scope>SUBCELLULAR LOCATION</scope>
    <scope>DOMAIN</scope>
</reference>
<reference key="19">
    <citation type="journal article" date="2012" name="Nat. Commun.">
        <title>Quantitative maps of protein phosphorylation sites across 14 different rat organs and tissues.</title>
        <authorList>
            <person name="Lundby A."/>
            <person name="Secher A."/>
            <person name="Lage K."/>
            <person name="Nordsborg N.B."/>
            <person name="Dmytriyev A."/>
            <person name="Lundby C."/>
            <person name="Olsen J.V."/>
        </authorList>
    </citation>
    <scope>IDENTIFICATION BY MASS SPECTROMETRY [LARGE SCALE ANALYSIS]</scope>
</reference>
<reference key="20">
    <citation type="journal article" date="2016" name="PLoS ONE">
        <title>Identification of a disulfide bridge in sodium-coupled neutral amino acid transporter 2(SNAT2) by chemical modification.</title>
        <authorList>
            <person name="Chen C."/>
            <person name="Wang J."/>
            <person name="Cai R."/>
            <person name="Yuan Y."/>
            <person name="Guo Z."/>
            <person name="Grewer C."/>
            <person name="Zhang Z."/>
        </authorList>
    </citation>
    <scope>FUNCTION</scope>
    <scope>TRANSPORTER ACTIVITY</scope>
    <scope>BIOPHYSICOCHEMICAL PROPERTIES</scope>
    <scope>SUBCELLULAR LOCATION</scope>
    <scope>DISULFIDE BOND</scope>
    <scope>MUTAGENESIS OF CYS-228; CYS-238; CYS-245; CYS-279; CYS-303; CYS-401 AND CYS-475</scope>
</reference>
<reference key="21">
    <citation type="journal article" date="2018" name="Biochim. Biophys. Acta">
        <title>Membrane topology of rat sodium-coupled neutral amino acid transporter 2 (SNAT2).</title>
        <authorList>
            <person name="Ge Y."/>
            <person name="Gu Y."/>
            <person name="Wang J."/>
            <person name="Zhang Z."/>
        </authorList>
    </citation>
    <scope>TOPOLOGY</scope>
    <scope>GLYCOSYLATION AT ASN-254; ASN-258 AND ASN-272</scope>
    <scope>MUTAGENESIS OF ASN-254; ASN-258 AND ASN-272</scope>
    <scope>SUBCELLULAR LOCATION</scope>
</reference>
<evidence type="ECO:0000250" key="1">
    <source>
        <dbReference type="UniProtKB" id="Q8CFE6"/>
    </source>
</evidence>
<evidence type="ECO:0000250" key="2">
    <source>
        <dbReference type="UniProtKB" id="Q96QD8"/>
    </source>
</evidence>
<evidence type="ECO:0000255" key="3"/>
<evidence type="ECO:0000256" key="4">
    <source>
        <dbReference type="SAM" id="MobiDB-lite"/>
    </source>
</evidence>
<evidence type="ECO:0000269" key="5">
    <source>
    </source>
</evidence>
<evidence type="ECO:0000269" key="6">
    <source>
    </source>
</evidence>
<evidence type="ECO:0000269" key="7">
    <source>
    </source>
</evidence>
<evidence type="ECO:0000269" key="8">
    <source>
    </source>
</evidence>
<evidence type="ECO:0000269" key="9">
    <source>
    </source>
</evidence>
<evidence type="ECO:0000269" key="10">
    <source>
    </source>
</evidence>
<evidence type="ECO:0000269" key="11">
    <source>
    </source>
</evidence>
<evidence type="ECO:0000269" key="12">
    <source>
    </source>
</evidence>
<evidence type="ECO:0000269" key="13">
    <source>
    </source>
</evidence>
<evidence type="ECO:0000269" key="14">
    <source>
    </source>
</evidence>
<evidence type="ECO:0000269" key="15">
    <source>
    </source>
</evidence>
<evidence type="ECO:0000269" key="16">
    <source>
    </source>
</evidence>
<evidence type="ECO:0000269" key="17">
    <source>
    </source>
</evidence>
<evidence type="ECO:0000269" key="18">
    <source>
    </source>
</evidence>
<evidence type="ECO:0000269" key="19">
    <source>
    </source>
</evidence>
<evidence type="ECO:0000269" key="20">
    <source>
    </source>
</evidence>
<evidence type="ECO:0000269" key="21">
    <source>
    </source>
</evidence>
<evidence type="ECO:0000269" key="22">
    <source>
    </source>
</evidence>
<evidence type="ECO:0000269" key="23">
    <source>
    </source>
</evidence>
<evidence type="ECO:0000269" key="24">
    <source>
    </source>
</evidence>
<evidence type="ECO:0000303" key="25">
    <source>
    </source>
</evidence>
<evidence type="ECO:0000303" key="26">
    <source>
    </source>
</evidence>
<evidence type="ECO:0000303" key="27">
    <source>
    </source>
</evidence>
<evidence type="ECO:0000303" key="28">
    <source>
    </source>
</evidence>
<evidence type="ECO:0000305" key="29"/>
<evidence type="ECO:0000305" key="30">
    <source>
    </source>
</evidence>
<evidence type="ECO:0000305" key="31">
    <source>
    </source>
</evidence>
<evidence type="ECO:0000305" key="32">
    <source>
    </source>
</evidence>
<evidence type="ECO:0000305" key="33">
    <source>
    </source>
</evidence>
<evidence type="ECO:0000305" key="34">
    <source>
    </source>
</evidence>
<evidence type="ECO:0000312" key="35">
    <source>
        <dbReference type="RGD" id="69420"/>
    </source>
</evidence>
<organism>
    <name type="scientific">Rattus norvegicus</name>
    <name type="common">Rat</name>
    <dbReference type="NCBI Taxonomy" id="10116"/>
    <lineage>
        <taxon>Eukaryota</taxon>
        <taxon>Metazoa</taxon>
        <taxon>Chordata</taxon>
        <taxon>Craniata</taxon>
        <taxon>Vertebrata</taxon>
        <taxon>Euteleostomi</taxon>
        <taxon>Mammalia</taxon>
        <taxon>Eutheria</taxon>
        <taxon>Euarchontoglires</taxon>
        <taxon>Glires</taxon>
        <taxon>Rodentia</taxon>
        <taxon>Myomorpha</taxon>
        <taxon>Muroidea</taxon>
        <taxon>Muridae</taxon>
        <taxon>Murinae</taxon>
        <taxon>Rattus</taxon>
    </lineage>
</organism>
<sequence>MKKTEMGRFNISPDEDSSSYSSNGDFNYSYPTKQAALKSHYVDVDPENQNFLLESNLGKKKYETDFHPGTTSFGMSVFNLSNAIVGSGILGLSYAMANTGIALFIILLTFVSIFSLYSVHLLLKTANEGGSLLYEQLGHKAYGLAGKLAASGSITMQNIGAMSSYLFIVKYELPLVIKALMNIEDTNGLWYLNGDYLVLLVSFVLILPLSLLRNLGYLGYTSGLSLLCMIFFLIVVICKKFQIPCPVEVALMANETVNGTFTQVALAALASNSTAADTCRPRYFIFNSQTVYAVPILTFSFVCHPAVLPIYEELKSRSRRRMMNVSKISFFAMFLMYLLAALFGYLTFYEHVESELLHTYSAIVGTDILLLVVRLAVLVAVTLTVPVVIFPIRSSVTHLLCPTKEFSWFRHSVITVTILAFTNLLVIFVPTIRDIFGFIGASAAAMLIFILPSAFYIKLVKKEPMRSVQKIGALCFLLSGVVVMIGSMGLIVLDWVHDASAGGH</sequence>
<feature type="chain" id="PRO_0000311372" description="Sodium-coupled neutral amino acid symporter 2">
    <location>
        <begin position="1"/>
        <end position="504"/>
    </location>
</feature>
<feature type="topological domain" description="Cytoplasmic" evidence="3 34">
    <location>
        <begin position="1"/>
        <end position="76"/>
    </location>
</feature>
<feature type="transmembrane region" description="Helical" evidence="3">
    <location>
        <begin position="77"/>
        <end position="96"/>
    </location>
</feature>
<feature type="topological domain" description="Extracellular" evidence="3 34">
    <location>
        <begin position="97"/>
        <end position="102"/>
    </location>
</feature>
<feature type="transmembrane region" description="Helical" evidence="3 34">
    <location>
        <begin position="103"/>
        <end position="123"/>
    </location>
</feature>
<feature type="topological domain" description="Cytoplasmic" evidence="3 34">
    <location>
        <begin position="124"/>
        <end position="158"/>
    </location>
</feature>
<feature type="transmembrane region" description="Helical" evidence="3 34">
    <location>
        <begin position="159"/>
        <end position="177"/>
    </location>
</feature>
<feature type="topological domain" description="Extracellular" evidence="3">
    <location>
        <begin position="178"/>
        <end position="188"/>
    </location>
</feature>
<feature type="transmembrane region" description="Helical" evidence="3 34">
    <location>
        <begin position="189"/>
        <end position="209"/>
    </location>
</feature>
<feature type="topological domain" description="Cytoplasmic" evidence="3 34">
    <location>
        <begin position="210"/>
        <end position="217"/>
    </location>
</feature>
<feature type="transmembrane region" description="Helical" evidence="3 34">
    <location>
        <begin position="218"/>
        <end position="238"/>
    </location>
</feature>
<feature type="topological domain" description="Extracellular" evidence="3 34">
    <location>
        <begin position="239"/>
        <end position="290"/>
    </location>
</feature>
<feature type="transmembrane region" description="Helical" evidence="3 34">
    <location>
        <begin position="291"/>
        <end position="311"/>
    </location>
</feature>
<feature type="topological domain" description="Cytoplasmic" evidence="3 34">
    <location>
        <begin position="312"/>
        <end position="327"/>
    </location>
</feature>
<feature type="transmembrane region" description="Helical" evidence="3">
    <location>
        <begin position="328"/>
        <end position="348"/>
    </location>
</feature>
<feature type="topological domain" description="Extracellular" evidence="3 34">
    <location>
        <begin position="349"/>
        <end position="369"/>
    </location>
</feature>
<feature type="transmembrane region" description="Helical" evidence="3">
    <location>
        <begin position="370"/>
        <end position="390"/>
    </location>
</feature>
<feature type="topological domain" description="Cytoplasmic" evidence="3 34">
    <location>
        <begin position="391"/>
        <end position="411"/>
    </location>
</feature>
<feature type="transmembrane region" description="Helical" evidence="3">
    <location>
        <begin position="412"/>
        <end position="432"/>
    </location>
</feature>
<feature type="topological domain" description="Extracellular" evidence="3 34">
    <location>
        <begin position="433"/>
        <end position="434"/>
    </location>
</feature>
<feature type="transmembrane region" description="Helical" evidence="3 34">
    <location>
        <begin position="435"/>
        <end position="455"/>
    </location>
</feature>
<feature type="topological domain" description="Cytoplasmic" evidence="3">
    <location>
        <begin position="456"/>
        <end position="470"/>
    </location>
</feature>
<feature type="transmembrane region" description="Helical" evidence="3 34">
    <location>
        <begin position="471"/>
        <end position="493"/>
    </location>
</feature>
<feature type="topological domain" description="Extracellular" evidence="32 34">
    <location>
        <begin position="494"/>
        <end position="504"/>
    </location>
</feature>
<feature type="region of interest" description="Regulates protein turnover upon amino acid deprivation">
    <location>
        <begin position="1"/>
        <end position="96"/>
    </location>
</feature>
<feature type="region of interest" description="Disordered" evidence="4">
    <location>
        <begin position="1"/>
        <end position="22"/>
    </location>
</feature>
<feature type="binding site" evidence="33">
    <location>
        <position position="82"/>
    </location>
    <ligand>
        <name>Na(+)</name>
        <dbReference type="ChEBI" id="CHEBI:29101"/>
    </ligand>
</feature>
<feature type="binding site" evidence="33">
    <location>
        <position position="384"/>
    </location>
    <ligand>
        <name>Na(+)</name>
        <dbReference type="ChEBI" id="CHEBI:29101"/>
    </ligand>
</feature>
<feature type="modified residue" description="Phosphoserine" evidence="2">
    <location>
        <position position="12"/>
    </location>
</feature>
<feature type="modified residue" description="Phosphoserine" evidence="1">
    <location>
        <position position="21"/>
    </location>
</feature>
<feature type="modified residue" description="Phosphoserine" evidence="2">
    <location>
        <position position="22"/>
    </location>
</feature>
<feature type="modified residue" description="Phosphoserine" evidence="2">
    <location>
        <position position="55"/>
    </location>
</feature>
<feature type="glycosylation site" description="N-linked (GlcNAc...) asparagine" evidence="3 24">
    <location>
        <position position="254"/>
    </location>
</feature>
<feature type="glycosylation site" description="N-linked (GlcNAc...) asparagine" evidence="3 24">
    <location>
        <position position="258"/>
    </location>
</feature>
<feature type="glycosylation site" description="N-linked (GlcNAc...) asparagine" evidence="3 24">
    <location>
        <position position="272"/>
    </location>
</feature>
<feature type="disulfide bond" evidence="23">
    <location>
        <begin position="245"/>
        <end position="279"/>
    </location>
</feature>
<feature type="mutagenesis site" description="Impairs amino acid transport. Impairs the interaction of SNAT2 with the cotransported sodium ion." evidence="18">
    <original>N</original>
    <variation>A</variation>
    <location>
        <position position="82"/>
    </location>
</feature>
<feature type="mutagenesis site" description="Loss of amino acid transport activity. Loss of amino acid uptake activity. Reduces the amino acid affinity." evidence="18">
    <original>N</original>
    <variation>S</variation>
    <location>
        <position position="82"/>
    </location>
</feature>
<feature type="mutagenesis site" description="Reduces amino acid transport activity of 75%. Significantly decreases alanine transport activity." evidence="23">
    <original>C</original>
    <variation>S</variation>
    <location>
        <position position="228"/>
    </location>
</feature>
<feature type="mutagenesis site" description="Decreases alanine transport activity." evidence="23">
    <original>C</original>
    <variation>S</variation>
    <location>
        <position position="238"/>
    </location>
</feature>
<feature type="mutagenesis site" description="Does not affect cell membrane localization." evidence="23">
    <original>C</original>
    <variation>A</variation>
    <location>
        <position position="245"/>
    </location>
</feature>
<feature type="mutagenesis site" description="Does not affect amino acid transport activity. Significantly decreases alanine transport activity." evidence="23">
    <original>C</original>
    <variation>S</variation>
    <location>
        <position position="245"/>
    </location>
</feature>
<feature type="mutagenesis site" description="Partially loss of glycosylation. Completely loss of glycosylation; when associated with Q-258 and Q-272. Decreases expression; when associated with Q-258 and Q-272. Does not affect cell membrane localization; when associated with Q-258 and Q-272." evidence="24">
    <original>N</original>
    <variation>Q</variation>
    <location>
        <position position="254"/>
    </location>
</feature>
<feature type="mutagenesis site" description="Partially loss of glycosylation. Dramatically loss of glycosylation; when associated with Q-272. Completely loss of glycosylation; when associated with Q-254 and Q-272. Decreases expression; when associated with Q-272. Decreases expression; when associated with Q-254 and Q-272. Does not affect cell membrane localization; when associated with Q-272. Does not affect cell membrane localization; when associated with Q-254 and Q-272." evidence="24">
    <original>N</original>
    <variation>Q</variation>
    <location>
        <position position="258"/>
    </location>
</feature>
<feature type="mutagenesis site" description="Partially loss of glycosylation. Dramatically loss of glycosylation; when associated with Q-258. Completely loss of glycosylation; when associated with Q-254 and Q-258. Decreases expression; when associated with Q-258. Decreases expression; when associated with Q-254 and Q-258. Does not affect cell membrane localization; when associated with Q-258. Does not affect cell membrane localization; when associated with Q-254 and Q-258." evidence="24">
    <original>N</original>
    <variation>Q</variation>
    <location>
        <position position="272"/>
    </location>
</feature>
<feature type="mutagenesis site" description="Does not affect cell membrane localization." evidence="23">
    <original>C</original>
    <variation>A</variation>
    <location>
        <position position="279"/>
    </location>
</feature>
<feature type="mutagenesis site" description="Does not affect amino acid transport activity. Significantly decreases alanine transport activity." evidence="23">
    <original>C</original>
    <variation>S</variation>
    <location>
        <position position="279"/>
    </location>
</feature>
<feature type="mutagenesis site" description="Reduces amino acid transport activity of 75%. Significantly decreases alanine transport activity." evidence="23">
    <original>C</original>
    <variation>S</variation>
    <location>
        <position position="303"/>
    </location>
</feature>
<feature type="mutagenesis site" description="Impairs transport current. Reduces the amino acid affinity." evidence="18">
    <original>Y</original>
    <variation>A</variation>
    <location>
        <position position="337"/>
    </location>
</feature>
<feature type="mutagenesis site" description="Does not affect the alanine-induced transport current. Reduces the amino acid affinity." evidence="18">
    <original>R</original>
    <variation>Q</variation>
    <location>
        <position position="374"/>
    </location>
</feature>
<feature type="mutagenesis site" description="Does not affect cell membrane localization. Eliminates the sodium-induced anion leak current. Inhibits amino acid transport activity. Reduces affinity for sodium ion." evidence="21">
    <original>T</original>
    <variation>A</variation>
    <location>
        <position position="384"/>
    </location>
</feature>
<feature type="mutagenesis site" description="Does not affect alanine transport activity." evidence="23">
    <original>C</original>
    <variation>S</variation>
    <location>
        <position position="401"/>
    </location>
</feature>
<feature type="mutagenesis site" description="Significantly decreases alanine transport activity." evidence="23">
    <original>C</original>
    <variation>S</variation>
    <location>
        <position position="475"/>
    </location>
</feature>
<feature type="mutagenesis site" description="Modifies the transporter pH-sensitivity." evidence="16">
    <original>H</original>
    <variation>A</variation>
    <location>
        <position position="504"/>
    </location>
</feature>
<feature type="sequence conflict" description="In Ref. 1; AAF74195." evidence="29" ref="1">
    <original>G</original>
    <variation>S</variation>
    <location>
        <position position="69"/>
    </location>
</feature>
<feature type="sequence conflict" description="In Ref. 1; AAF74195." evidence="29" ref="1">
    <original>S</original>
    <variation>T</variation>
    <location>
        <position position="81"/>
    </location>
</feature>
<feature type="sequence conflict" description="In Ref. 1; AAF74195." evidence="29" ref="1">
    <original>S</original>
    <variation>N</variation>
    <location>
        <position position="87"/>
    </location>
</feature>
<accession>Q9JHE5</accession>
<accession>Q9JI88</accession>
<dbReference type="EMBL" id="AF249673">
    <property type="protein sequence ID" value="AAF74195.1"/>
    <property type="molecule type" value="mRNA"/>
</dbReference>
<dbReference type="EMBL" id="AF173682">
    <property type="protein sequence ID" value="AAF75589.2"/>
    <property type="molecule type" value="mRNA"/>
</dbReference>
<dbReference type="EMBL" id="AF273024">
    <property type="protein sequence ID" value="AAF81796.1"/>
    <property type="molecule type" value="mRNA"/>
</dbReference>
<dbReference type="RefSeq" id="NP_851604.2">
    <property type="nucleotide sequence ID" value="NM_181090.3"/>
</dbReference>
<dbReference type="SMR" id="Q9JHE5"/>
<dbReference type="FunCoup" id="Q9JHE5">
    <property type="interactions" value="1627"/>
</dbReference>
<dbReference type="STRING" id="10116.ENSRNOP00000031532"/>
<dbReference type="TCDB" id="2.A.18.6.4">
    <property type="family name" value="the amino acid/auxin permease (aaap) family"/>
</dbReference>
<dbReference type="GlyCosmos" id="Q9JHE5">
    <property type="glycosylation" value="2 sites, No reported glycans"/>
</dbReference>
<dbReference type="GlyGen" id="Q9JHE5">
    <property type="glycosylation" value="3 sites"/>
</dbReference>
<dbReference type="iPTMnet" id="Q9JHE5"/>
<dbReference type="PhosphoSitePlus" id="Q9JHE5"/>
<dbReference type="SwissPalm" id="Q9JHE5"/>
<dbReference type="PaxDb" id="10116-ENSRNOP00000031532"/>
<dbReference type="Ensembl" id="ENSRNOT00000039002.4">
    <property type="protein sequence ID" value="ENSRNOP00000031532.2"/>
    <property type="gene ID" value="ENSRNOG00000006305.6"/>
</dbReference>
<dbReference type="GeneID" id="29642"/>
<dbReference type="KEGG" id="rno:29642"/>
<dbReference type="AGR" id="RGD:69420"/>
<dbReference type="CTD" id="54407"/>
<dbReference type="RGD" id="69420">
    <property type="gene designation" value="Slc38a2"/>
</dbReference>
<dbReference type="eggNOG" id="KOG1305">
    <property type="taxonomic scope" value="Eukaryota"/>
</dbReference>
<dbReference type="GeneTree" id="ENSGT00940000155486"/>
<dbReference type="HOGENOM" id="CLU_009020_0_1_1"/>
<dbReference type="InParanoid" id="Q9JHE5"/>
<dbReference type="OMA" id="DSIHHQR"/>
<dbReference type="OrthoDB" id="655540at2759"/>
<dbReference type="PhylomeDB" id="Q9JHE5"/>
<dbReference type="TreeFam" id="TF328787"/>
<dbReference type="Reactome" id="R-RNO-210500">
    <property type="pathway name" value="Glutamate Neurotransmitter Release Cycle"/>
</dbReference>
<dbReference type="Reactome" id="R-RNO-352230">
    <property type="pathway name" value="Amino acid transport across the plasma membrane"/>
</dbReference>
<dbReference type="SABIO-RK" id="Q9JHE5"/>
<dbReference type="PRO" id="PR:Q9JHE5"/>
<dbReference type="Proteomes" id="UP000002494">
    <property type="component" value="Chromosome 7"/>
</dbReference>
<dbReference type="Bgee" id="ENSRNOG00000006305">
    <property type="expression patterns" value="Expressed in esophagus and 19 other cell types or tissues"/>
</dbReference>
<dbReference type="GO" id="GO:0030424">
    <property type="term" value="C:axon"/>
    <property type="evidence" value="ECO:0000314"/>
    <property type="project" value="RGD"/>
</dbReference>
<dbReference type="GO" id="GO:0005903">
    <property type="term" value="C:brush border"/>
    <property type="evidence" value="ECO:0000314"/>
    <property type="project" value="RGD"/>
</dbReference>
<dbReference type="GO" id="GO:0005737">
    <property type="term" value="C:cytoplasm"/>
    <property type="evidence" value="ECO:0000266"/>
    <property type="project" value="RGD"/>
</dbReference>
<dbReference type="GO" id="GO:0030425">
    <property type="term" value="C:dendrite"/>
    <property type="evidence" value="ECO:0000314"/>
    <property type="project" value="RGD"/>
</dbReference>
<dbReference type="GO" id="GO:0043025">
    <property type="term" value="C:neuronal cell body"/>
    <property type="evidence" value="ECO:0000314"/>
    <property type="project" value="RGD"/>
</dbReference>
<dbReference type="GO" id="GO:0005886">
    <property type="term" value="C:plasma membrane"/>
    <property type="evidence" value="ECO:0000314"/>
    <property type="project" value="UniProtKB"/>
</dbReference>
<dbReference type="GO" id="GO:0042383">
    <property type="term" value="C:sarcolemma"/>
    <property type="evidence" value="ECO:0000314"/>
    <property type="project" value="RGD"/>
</dbReference>
<dbReference type="GO" id="GO:0015172">
    <property type="term" value="F:acidic amino acid transmembrane transporter activity"/>
    <property type="evidence" value="ECO:0000314"/>
    <property type="project" value="UniProtKB"/>
</dbReference>
<dbReference type="GO" id="GO:0022853">
    <property type="term" value="F:active monoatomic ion transmembrane transporter activity"/>
    <property type="evidence" value="ECO:0007669"/>
    <property type="project" value="UniProtKB-ARBA"/>
</dbReference>
<dbReference type="GO" id="GO:0015655">
    <property type="term" value="F:alanine:sodium symporter activity"/>
    <property type="evidence" value="ECO:0000314"/>
    <property type="project" value="UniProtKB"/>
</dbReference>
<dbReference type="GO" id="GO:0015171">
    <property type="term" value="F:amino acid transmembrane transporter activity"/>
    <property type="evidence" value="ECO:0000266"/>
    <property type="project" value="RGD"/>
</dbReference>
<dbReference type="GO" id="GO:0005283">
    <property type="term" value="F:amino acid:sodium symporter activity"/>
    <property type="evidence" value="ECO:0000314"/>
    <property type="project" value="UniProtKB"/>
</dbReference>
<dbReference type="GO" id="GO:0015186">
    <property type="term" value="F:L-glutamine transmembrane transporter activity"/>
    <property type="evidence" value="ECO:0000314"/>
    <property type="project" value="UniProtKB"/>
</dbReference>
<dbReference type="GO" id="GO:0015194">
    <property type="term" value="F:L-serine transmembrane transporter activity"/>
    <property type="evidence" value="ECO:0000314"/>
    <property type="project" value="ARUK-UCL"/>
</dbReference>
<dbReference type="GO" id="GO:0015175">
    <property type="term" value="F:neutral L-amino acid transmembrane transporter activity"/>
    <property type="evidence" value="ECO:0000266"/>
    <property type="project" value="RGD"/>
</dbReference>
<dbReference type="GO" id="GO:0005295">
    <property type="term" value="F:neutral L-amino acid:sodium symporter activity"/>
    <property type="evidence" value="ECO:0000314"/>
    <property type="project" value="UniProtKB"/>
</dbReference>
<dbReference type="GO" id="GO:0005298">
    <property type="term" value="F:proline:sodium symporter activity"/>
    <property type="evidence" value="ECO:0000314"/>
    <property type="project" value="UniProtKB"/>
</dbReference>
<dbReference type="GO" id="GO:0032328">
    <property type="term" value="P:alanine transport"/>
    <property type="evidence" value="ECO:0000314"/>
    <property type="project" value="UniProtKB"/>
</dbReference>
<dbReference type="GO" id="GO:0043090">
    <property type="term" value="P:amino acid import"/>
    <property type="evidence" value="ECO:0000314"/>
    <property type="project" value="UniProtKB"/>
</dbReference>
<dbReference type="GO" id="GO:0003333">
    <property type="term" value="P:amino acid transmembrane transport"/>
    <property type="evidence" value="ECO:0000266"/>
    <property type="project" value="RGD"/>
</dbReference>
<dbReference type="GO" id="GO:0006865">
    <property type="term" value="P:amino acid transport"/>
    <property type="evidence" value="ECO:0000266"/>
    <property type="project" value="RGD"/>
</dbReference>
<dbReference type="GO" id="GO:0034198">
    <property type="term" value="P:cellular response to amino acid starvation"/>
    <property type="evidence" value="ECO:0000270"/>
    <property type="project" value="RGD"/>
</dbReference>
<dbReference type="GO" id="GO:1903841">
    <property type="term" value="P:cellular response to arsenite(3-)"/>
    <property type="evidence" value="ECO:0000266"/>
    <property type="project" value="RGD"/>
</dbReference>
<dbReference type="GO" id="GO:0071260">
    <property type="term" value="P:cellular response to mechanical stimulus"/>
    <property type="evidence" value="ECO:0000270"/>
    <property type="project" value="RGD"/>
</dbReference>
<dbReference type="GO" id="GO:0021987">
    <property type="term" value="P:cerebral cortex development"/>
    <property type="evidence" value="ECO:0000270"/>
    <property type="project" value="RGD"/>
</dbReference>
<dbReference type="GO" id="GO:0007565">
    <property type="term" value="P:female pregnancy"/>
    <property type="evidence" value="ECO:0000270"/>
    <property type="project" value="RGD"/>
</dbReference>
<dbReference type="GO" id="GO:0006868">
    <property type="term" value="P:glutamine transport"/>
    <property type="evidence" value="ECO:0000314"/>
    <property type="project" value="ARUK-UCL"/>
</dbReference>
<dbReference type="GO" id="GO:0031460">
    <property type="term" value="P:glycine betaine transport"/>
    <property type="evidence" value="ECO:0000314"/>
    <property type="project" value="RGD"/>
</dbReference>
<dbReference type="GO" id="GO:1903803">
    <property type="term" value="P:L-glutamine import across plasma membrane"/>
    <property type="evidence" value="ECO:0000314"/>
    <property type="project" value="UniProtKB"/>
</dbReference>
<dbReference type="GO" id="GO:1904271">
    <property type="term" value="P:L-proline import across plasma membrane"/>
    <property type="evidence" value="ECO:0000314"/>
    <property type="project" value="UniProtKB"/>
</dbReference>
<dbReference type="GO" id="GO:1903812">
    <property type="term" value="P:L-serine import across plasma membrane"/>
    <property type="evidence" value="ECO:0000314"/>
    <property type="project" value="UniProtKB"/>
</dbReference>
<dbReference type="GO" id="GO:0015825">
    <property type="term" value="P:L-serine transport"/>
    <property type="evidence" value="ECO:0000314"/>
    <property type="project" value="ARUK-UCL"/>
</dbReference>
<dbReference type="GO" id="GO:0015804">
    <property type="term" value="P:neutral amino acid transport"/>
    <property type="evidence" value="ECO:0000314"/>
    <property type="project" value="UniProtKB"/>
</dbReference>
<dbReference type="GO" id="GO:0010628">
    <property type="term" value="P:positive regulation of gene expression"/>
    <property type="evidence" value="ECO:0000266"/>
    <property type="project" value="RGD"/>
</dbReference>
<dbReference type="GO" id="GO:0033120">
    <property type="term" value="P:positive regulation of RNA splicing"/>
    <property type="evidence" value="ECO:0000266"/>
    <property type="project" value="RGD"/>
</dbReference>
<dbReference type="GO" id="GO:0015824">
    <property type="term" value="P:proline transport"/>
    <property type="evidence" value="ECO:0000266"/>
    <property type="project" value="RGD"/>
</dbReference>
<dbReference type="GO" id="GO:0080135">
    <property type="term" value="P:regulation of cellular response to stress"/>
    <property type="evidence" value="ECO:0000266"/>
    <property type="project" value="RGD"/>
</dbReference>
<dbReference type="GO" id="GO:1903294">
    <property type="term" value="P:regulation of glutamate secretion, neurotransmission"/>
    <property type="evidence" value="ECO:0000314"/>
    <property type="project" value="UniProtKB"/>
</dbReference>
<dbReference type="GO" id="GO:0014850">
    <property type="term" value="P:response to muscle activity"/>
    <property type="evidence" value="ECO:0000270"/>
    <property type="project" value="RGD"/>
</dbReference>
<dbReference type="InterPro" id="IPR013057">
    <property type="entry name" value="AA_transpt_TM"/>
</dbReference>
<dbReference type="PANTHER" id="PTHR22950">
    <property type="entry name" value="AMINO ACID TRANSPORTER"/>
    <property type="match status" value="1"/>
</dbReference>
<dbReference type="PANTHER" id="PTHR22950:SF207">
    <property type="entry name" value="SODIUM-COUPLED NEUTRAL AMINO ACID SYMPORTER 2"/>
    <property type="match status" value="1"/>
</dbReference>
<dbReference type="Pfam" id="PF01490">
    <property type="entry name" value="Aa_trans"/>
    <property type="match status" value="1"/>
</dbReference>
<gene>
    <name evidence="35" type="primary">Slc38a2</name>
    <name evidence="25" type="synonym">Ata2</name>
    <name evidence="26" type="synonym">Sa1</name>
    <name evidence="27" type="synonym">Sat2</name>
    <name evidence="28" type="synonym">Snat2</name>
</gene>
<proteinExistence type="evidence at protein level"/>
<name>S38A2_RAT</name>
<comment type="function">
    <text evidence="1 5 6 7 9 10 12 13 16 18 19 20 21 22 23">Symporter that cotransports neutral amino acids and sodium ions from the extracellular to the intracellular side of the cell membrane (PubMed:10747860, PubMed:10811809, PubMed:10859363, PubMed:11716780, PubMed:11756489, PubMed:12054432, PubMed:16629640, PubMed:18319257, PubMed:18330498, PubMed:18832333, PubMed:19589777, PubMed:21158741, PubMed:27355203). The transport is pH-sensitive, Li(+)-intolerant, electrogenic, driven by the Na(+) electrochemical gradient and cotransports of neutral amino acids and sodium ions with a stoichiometry of 1:1 (PubMed:10747860, PubMed:10811809, PubMed:10859363, PubMed:11716780, PubMed:11756489, PubMed:12054432, PubMed:16629640, PubMed:18319257, PubMed:19589777, PubMed:21158741). May function in the transport of amino acids at the blood-brain barrier (PubMed:12021389). May function in the transport of amino acids in the supply of maternal nutrients to the fetus through the placenta (By similarity). Maintains a key metabolic glutamine/glutamate balance underpinning retrograde signaling by dendritic release of the neurotransmitter glutamate (PubMed:18832333). Transports L-proline in differentiating osteoblasts for the efficient synthesis of proline-enriched proteins and provides proline essential for osteoblast differentiation and bone formation during bone development (By similarity).</text>
</comment>
<comment type="catalytic activity">
    <reaction evidence="5 6 7 10 18 21 22 23">
        <text>L-alanine(in) + Na(+)(in) = L-alanine(out) + Na(+)(out)</text>
        <dbReference type="Rhea" id="RHEA:29283"/>
        <dbReference type="ChEBI" id="CHEBI:29101"/>
        <dbReference type="ChEBI" id="CHEBI:57972"/>
    </reaction>
    <physiologicalReaction direction="right-to-left" evidence="30">
        <dbReference type="Rhea" id="RHEA:29285"/>
    </physiologicalReaction>
</comment>
<comment type="catalytic activity">
    <reaction evidence="5 7">
        <text>glycine(in) + Na(+)(in) = glycine(out) + Na(+)(out)</text>
        <dbReference type="Rhea" id="RHEA:68228"/>
        <dbReference type="ChEBI" id="CHEBI:29101"/>
        <dbReference type="ChEBI" id="CHEBI:57305"/>
    </reaction>
    <physiologicalReaction direction="right-to-left" evidence="30">
        <dbReference type="Rhea" id="RHEA:68230"/>
    </physiologicalReaction>
</comment>
<comment type="catalytic activity">
    <reaction evidence="5 7 16">
        <text>L-serine(in) + Na(+)(in) = L-serine(out) + Na(+)(out)</text>
        <dbReference type="Rhea" id="RHEA:29575"/>
        <dbReference type="ChEBI" id="CHEBI:29101"/>
        <dbReference type="ChEBI" id="CHEBI:33384"/>
    </reaction>
    <physiologicalReaction direction="right-to-left" evidence="30">
        <dbReference type="Rhea" id="RHEA:29577"/>
    </physiologicalReaction>
</comment>
<comment type="catalytic activity">
    <reaction evidence="5 7 9 10">
        <text>L-proline(in) + Na(+)(in) = L-proline(out) + Na(+)(out)</text>
        <dbReference type="Rhea" id="RHEA:28967"/>
        <dbReference type="ChEBI" id="CHEBI:29101"/>
        <dbReference type="ChEBI" id="CHEBI:60039"/>
    </reaction>
    <physiologicalReaction direction="right-to-left" evidence="30">
        <dbReference type="Rhea" id="RHEA:28969"/>
    </physiologicalReaction>
</comment>
<comment type="catalytic activity">
    <reaction evidence="5 7">
        <text>L-methionine(in) + Na(+)(in) = L-methionine(out) + Na(+)(out)</text>
        <dbReference type="Rhea" id="RHEA:68240"/>
        <dbReference type="ChEBI" id="CHEBI:29101"/>
        <dbReference type="ChEBI" id="CHEBI:57844"/>
    </reaction>
    <physiologicalReaction direction="right-to-left" evidence="30">
        <dbReference type="Rhea" id="RHEA:68242"/>
    </physiologicalReaction>
</comment>
<comment type="catalytic activity">
    <reaction evidence="5 7">
        <text>L-histidine(in) + Na(+)(in) = L-histidine(out) + Na(+)(out)</text>
        <dbReference type="Rhea" id="RHEA:71583"/>
        <dbReference type="ChEBI" id="CHEBI:29101"/>
        <dbReference type="ChEBI" id="CHEBI:57595"/>
    </reaction>
    <physiologicalReaction direction="right-to-left" evidence="30">
        <dbReference type="Rhea" id="RHEA:71585"/>
    </physiologicalReaction>
</comment>
<comment type="catalytic activity">
    <reaction evidence="5 7">
        <text>L-asparagine(in) + Na(+)(in) = L-asparagine(out) + Na(+)(out)</text>
        <dbReference type="Rhea" id="RHEA:71383"/>
        <dbReference type="ChEBI" id="CHEBI:29101"/>
        <dbReference type="ChEBI" id="CHEBI:58048"/>
    </reaction>
    <physiologicalReaction direction="right-to-left" evidence="30">
        <dbReference type="Rhea" id="RHEA:71385"/>
    </physiologicalReaction>
</comment>
<comment type="catalytic activity">
    <reaction evidence="5 6 7 10 20">
        <text>L-glutamine(in) + Na(+)(in) = L-glutamine(out) + Na(+)(out)</text>
        <dbReference type="Rhea" id="RHEA:68236"/>
        <dbReference type="ChEBI" id="CHEBI:29101"/>
        <dbReference type="ChEBI" id="CHEBI:58359"/>
    </reaction>
    <physiologicalReaction direction="right-to-left" evidence="30">
        <dbReference type="Rhea" id="RHEA:68238"/>
    </physiologicalReaction>
</comment>
<comment type="catalytic activity">
    <reaction evidence="5">
        <text>L-threonine(in) + Na(+)(in) = L-threonine(out) + Na(+)(out)</text>
        <dbReference type="Rhea" id="RHEA:69999"/>
        <dbReference type="ChEBI" id="CHEBI:29101"/>
        <dbReference type="ChEBI" id="CHEBI:57926"/>
    </reaction>
    <physiologicalReaction direction="right-to-left" evidence="30">
        <dbReference type="Rhea" id="RHEA:70001"/>
    </physiologicalReaction>
</comment>
<comment type="catalytic activity">
    <reaction evidence="5">
        <text>L-leucine(in) + Na(+)(in) = L-leucine(out) + Na(+)(out)</text>
        <dbReference type="Rhea" id="RHEA:29263"/>
        <dbReference type="ChEBI" id="CHEBI:29101"/>
        <dbReference type="ChEBI" id="CHEBI:57427"/>
    </reaction>
    <physiologicalReaction direction="right-to-left" evidence="30">
        <dbReference type="Rhea" id="RHEA:29265"/>
    </physiologicalReaction>
</comment>
<comment type="catalytic activity">
    <reaction evidence="5">
        <text>L-phenylalanine(in) + Na(+)(in) = L-phenylalanine(out) + Na(+)(out)</text>
        <dbReference type="Rhea" id="RHEA:68244"/>
        <dbReference type="ChEBI" id="CHEBI:29101"/>
        <dbReference type="ChEBI" id="CHEBI:58095"/>
    </reaction>
    <physiologicalReaction direction="right-to-left" evidence="30">
        <dbReference type="Rhea" id="RHEA:68246"/>
    </physiologicalReaction>
</comment>
<comment type="activity regulation">
    <text evidence="5 6 7 9 10 16">Inhibited by N-methyl-D-glucamine (PubMed:10747860). Inhibited by choline (PubMed:10811809, PubMed:10859363, PubMed:11716780). Allosteric regulation of sodium ions binding by pH (PubMed:11756489, PubMed:16629640).</text>
</comment>
<comment type="biophysicochemical properties">
    <kinetics>
        <KM evidence="6">0.529 mM for L-alanine (at pH 7.4)</KM>
        <KM evidence="6">1.65 mM for L-glutamine (at pH 7.4)</KM>
        <KM evidence="16">0.94 mM for L-serine (at pH 8.0)</KM>
        <KM evidence="5">0.23 mM for alpha-(methylamino)isobutyric acid (MeAIB) (at pH 8.0)</KM>
        <KM evidence="7">0.14 mM for alpha-(methylamino)isobutyric acid (MeAIB) (at pH 8.0)</KM>
        <KM evidence="6">0.53 mM for alpha-(methylamino)isobutyric acid (MeAIB) (at pH 7.4)</KM>
        <KM evidence="9">217 uM for L-proline</KM>
        <KM evidence="13">0.24 mM for alpha-(methylamino)isobutyric acid</KM>
        <KM evidence="10">52.2 mM for sodium ion (at pH 7)</KM>
        <KM evidence="10">11.1 mM for sodium ion (at pH 8)</KM>
        <KM evidence="10">0.65 mM for alpha-(methylamino)isobutyric acid (MeAIB) (at pH 7)</KM>
        <KM evidence="10">0.56 mM for alpha-(methylamino)isobutyric acid (MeAIB) (at pH 8)</KM>
        <KM evidence="18">200 uM for L-alanine (with a membrane potential at 0mV)</KM>
        <KM evidence="18">120 uM for L-alanine (with a membrane potential at (-)600mV)</KM>
        <KM evidence="21">0.8 mM for sodium ion</KM>
        <KM evidence="19">0.17 mM for alpha-(methylamino)isobutyric acid (MeAIB) (upon insulin stimulation)</KM>
        <KM evidence="19">0.08 mM for alpha-(methylamino)isobutyric acid (MeAIB) (upon osmotic shock)</KM>
        <KM evidence="19">0.11 mM for alpha-(methylamino)isobutyric acid (MeAIB) (upon Amino acid deprivation)</KM>
        <KM evidence="22">175 uM for L-alanine</KM>
        <KM evidence="22">100 mM for sodium ion</KM>
        <Vmax evidence="9">142.0 pmol/min/mg enzyme for L-proline</Vmax>
        <Vmax evidence="9">276.0 pmol/min/mg enzyme for L-proline (with 10 ng/ml of TGFB1)</Vmax>
    </kinetics>
</comment>
<comment type="subcellular location">
    <subcellularLocation>
        <location evidence="8 11 13 14 21 22 23 24 31">Cell membrane</location>
        <topology evidence="17 24">Multi-pass membrane protein</topology>
    </subcellularLocation>
    <text evidence="11 14 15 20">Insulin promotes recruitment to the plasma membrane from a pool localized in the trans-Golgi network or endosomes (PubMed:11834730). Enriched in the somatodendritic compartment of neurons, it is also detected at the axonal shaft but excluded from the nerve terminal (PubMed:15561425, PubMed:16616430, PubMed:18832333).</text>
</comment>
<comment type="tissue specificity">
    <text evidence="5 6 7 8 14 15 20">Widely expressed (PubMed:10747860, PubMed:10811809, PubMed:10859363). Expressed in skeletal muscle and adipose tissue (at protein level) (PubMed:11311116, PubMed:15561425). Expressed by glutamatergic and GABAergic neurons together with astrocytes and other non-neuronal cells in the cerebral cortex (at protein level) (PubMed:15561425, PubMed:16616430, PubMed:18832333). Widely expressed in the central nervous systeme where, it is enriched in the spinal cord and the brainstem nuclei, especially those of the auditory system (PubMed:15561425).</text>
</comment>
<comment type="induction">
    <text evidence="8 9 17 19">Up-regulation upon amino acid deprivation results from both increased transcription and protein stabilization (PubMed:11311116, PubMed:17488712, PubMed:18330498). Up-regulated by TGFB1 (PubMed:11716780). Up-regulation by insulin and osmotic shock (PubMed:18330498).</text>
</comment>
<comment type="domain">
    <text evidence="22">The extracellular C-terminal domain controls the voltage dependence for amino acid transports activity.</text>
</comment>
<comment type="PTM">
    <text evidence="1">Polyubiquitination by NEDD4L regulates the degradation and the activity of SLC38A2.</text>
</comment>
<comment type="similarity">
    <text evidence="29">Belongs to the amino acid/polyamine transporter 2 family.</text>
</comment>
<protein>
    <recommendedName>
        <fullName>Sodium-coupled neutral amino acid symporter 2</fullName>
    </recommendedName>
    <alternativeName>
        <fullName evidence="25">Amino acid transporter A2</fullName>
    </alternativeName>
    <alternativeName>
        <fullName>Solute carrier family 38 member 2</fullName>
    </alternativeName>
    <alternativeName>
        <fullName>System A amino acid transporter 2</fullName>
    </alternativeName>
    <alternativeName>
        <fullName evidence="26">System A transporter 1</fullName>
    </alternativeName>
    <alternativeName>
        <fullName>System N amino acid transporter 2</fullName>
    </alternativeName>
</protein>